<comment type="function">
    <text evidence="4 5 6">High-affinity H(+)/sulfate cotransporter that mediates the uptake of the environmental sulfate by plant roots under low-sulfur conditions. Plays a central role in the regulation of sulfate assimilation.</text>
</comment>
<comment type="subunit">
    <text evidence="7">Interacts with OASA1 through its STAS domain.</text>
</comment>
<comment type="subcellular location">
    <subcellularLocation>
        <location evidence="8">Membrane</location>
        <topology evidence="8">Multi-pass membrane protein</topology>
    </subcellularLocation>
</comment>
<comment type="tissue specificity">
    <text evidence="4 5 6">Expressed in lateral root cap, root hairs, epidermal and cortical cells of roots.</text>
</comment>
<comment type="induction">
    <text evidence="4 5 6">In roots by sulfate starvation or after selenate treatment.</text>
</comment>
<comment type="similarity">
    <text evidence="8">Belongs to the SLC26A/SulP transporter (TC 2.A.53) family.</text>
</comment>
<feature type="chain" id="PRO_0000080172" description="Sulfate transporter 1.1">
    <location>
        <begin position="1"/>
        <end position="649"/>
    </location>
</feature>
<feature type="topological domain" description="Cytoplasmic" evidence="1">
    <location>
        <begin position="1"/>
        <end position="86"/>
    </location>
</feature>
<feature type="transmembrane region" description="Helical" evidence="1">
    <location>
        <begin position="87"/>
        <end position="107"/>
    </location>
</feature>
<feature type="topological domain" description="Extracellular" evidence="1">
    <location>
        <begin position="108"/>
        <end position="111"/>
    </location>
</feature>
<feature type="transmembrane region" description="Helical" evidence="1">
    <location>
        <begin position="112"/>
        <end position="132"/>
    </location>
</feature>
<feature type="topological domain" description="Cytoplasmic" evidence="1">
    <location>
        <begin position="133"/>
        <end position="136"/>
    </location>
</feature>
<feature type="transmembrane region" description="Helical" evidence="1">
    <location>
        <begin position="137"/>
        <end position="157"/>
    </location>
</feature>
<feature type="topological domain" description="Extracellular" evidence="1">
    <location>
        <begin position="158"/>
        <end position="168"/>
    </location>
</feature>
<feature type="transmembrane region" description="Helical" evidence="1">
    <location>
        <begin position="169"/>
        <end position="189"/>
    </location>
</feature>
<feature type="transmembrane region" description="Helical" evidence="1">
    <location>
        <begin position="190"/>
        <end position="210"/>
    </location>
</feature>
<feature type="topological domain" description="Extracellular" evidence="1">
    <location>
        <begin position="211"/>
        <end position="248"/>
    </location>
</feature>
<feature type="transmembrane region" description="Helical" evidence="1">
    <location>
        <begin position="249"/>
        <end position="269"/>
    </location>
</feature>
<feature type="topological domain" description="Cytoplasmic" evidence="1">
    <location>
        <begin position="270"/>
        <end position="275"/>
    </location>
</feature>
<feature type="transmembrane region" description="Helical" evidence="1">
    <location>
        <begin position="276"/>
        <end position="296"/>
    </location>
</feature>
<feature type="topological domain" description="Extracellular" evidence="1">
    <location>
        <begin position="297"/>
        <end position="334"/>
    </location>
</feature>
<feature type="transmembrane region" description="Helical" evidence="1">
    <location>
        <begin position="335"/>
        <end position="355"/>
    </location>
</feature>
<feature type="topological domain" description="Cytoplasmic" evidence="1">
    <location>
        <begin position="356"/>
        <end position="367"/>
    </location>
</feature>
<feature type="transmembrane region" description="Helical" evidence="1">
    <location>
        <begin position="368"/>
        <end position="388"/>
    </location>
</feature>
<feature type="topological domain" description="Extracellular" evidence="1">
    <location>
        <begin position="389"/>
        <end position="404"/>
    </location>
</feature>
<feature type="transmembrane region" description="Helical" evidence="1">
    <location>
        <begin position="405"/>
        <end position="425"/>
    </location>
</feature>
<feature type="topological domain" description="Cytoplasmic" evidence="1">
    <location>
        <begin position="426"/>
        <end position="431"/>
    </location>
</feature>
<feature type="transmembrane region" description="Helical" evidence="1">
    <location>
        <begin position="432"/>
        <end position="452"/>
    </location>
</feature>
<feature type="topological domain" description="Extracellular" evidence="1">
    <location>
        <begin position="453"/>
        <end position="465"/>
    </location>
</feature>
<feature type="transmembrane region" description="Helical" evidence="1">
    <location>
        <begin position="466"/>
        <end position="486"/>
    </location>
</feature>
<feature type="topological domain" description="Cytoplasmic" evidence="1">
    <location>
        <begin position="487"/>
        <end position="649"/>
    </location>
</feature>
<feature type="domain" description="STAS" evidence="2">
    <location>
        <begin position="517"/>
        <end position="640"/>
    </location>
</feature>
<feature type="region of interest" description="Disordered" evidence="3">
    <location>
        <begin position="1"/>
        <end position="20"/>
    </location>
</feature>
<feature type="sequence conflict" description="In Ref. 1; BAA33932." evidence="8" ref="1">
    <original>N</original>
    <variation>S</variation>
    <location>
        <position position="17"/>
    </location>
</feature>
<reference key="1">
    <citation type="journal article" date="2000" name="Plant J.">
        <title>The roles of three functional sulphate transporters involved in uptake and translocation of sulphate in Arabidopsis thaliana.</title>
        <authorList>
            <person name="Takahashi H."/>
            <person name="Watanabe-Takahashi A."/>
            <person name="Smith F.W."/>
            <person name="Blake-Kalff M."/>
            <person name="Hawkesford M.J."/>
            <person name="Saito K."/>
        </authorList>
    </citation>
    <scope>NUCLEOTIDE SEQUENCE [MRNA]</scope>
    <scope>FUNCTION</scope>
    <scope>TISSUE SPECIFICITY</scope>
    <scope>INDUCTION</scope>
    <source>
        <strain>cv. Columbia</strain>
    </source>
</reference>
<reference key="2">
    <citation type="journal article" date="2000" name="FEBS Lett.">
        <title>Cloning and characterization of a root specific high-affinity sulfate transporter from Arabidopsis thaliana.</title>
        <authorList>
            <person name="Vidmar J.J."/>
            <person name="Tagmount A."/>
            <person name="Cathala N."/>
            <person name="Touraine B."/>
            <person name="Davidian J.-C.E."/>
        </authorList>
    </citation>
    <scope>NUCLEOTIDE SEQUENCE [MRNA]</scope>
    <scope>FUNCTION</scope>
    <scope>TISSUE SPECIFICITY</scope>
    <scope>INDUCTION</scope>
    <source>
        <strain>cv. Columbia</strain>
    </source>
</reference>
<reference key="3">
    <citation type="journal article" date="1999" name="Nature">
        <title>Sequence and analysis of chromosome 4 of the plant Arabidopsis thaliana.</title>
        <authorList>
            <person name="Mayer K.F.X."/>
            <person name="Schueller C."/>
            <person name="Wambutt R."/>
            <person name="Murphy G."/>
            <person name="Volckaert G."/>
            <person name="Pohl T."/>
            <person name="Duesterhoeft A."/>
            <person name="Stiekema W."/>
            <person name="Entian K.-D."/>
            <person name="Terryn N."/>
            <person name="Harris B."/>
            <person name="Ansorge W."/>
            <person name="Brandt P."/>
            <person name="Grivell L.A."/>
            <person name="Rieger M."/>
            <person name="Weichselgartner M."/>
            <person name="de Simone V."/>
            <person name="Obermaier B."/>
            <person name="Mache R."/>
            <person name="Mueller M."/>
            <person name="Kreis M."/>
            <person name="Delseny M."/>
            <person name="Puigdomenech P."/>
            <person name="Watson M."/>
            <person name="Schmidtheini T."/>
            <person name="Reichert B."/>
            <person name="Portetelle D."/>
            <person name="Perez-Alonso M."/>
            <person name="Boutry M."/>
            <person name="Bancroft I."/>
            <person name="Vos P."/>
            <person name="Hoheisel J."/>
            <person name="Zimmermann W."/>
            <person name="Wedler H."/>
            <person name="Ridley P."/>
            <person name="Langham S.-A."/>
            <person name="McCullagh B."/>
            <person name="Bilham L."/>
            <person name="Robben J."/>
            <person name="van der Schueren J."/>
            <person name="Grymonprez B."/>
            <person name="Chuang Y.-J."/>
            <person name="Vandenbussche F."/>
            <person name="Braeken M."/>
            <person name="Weltjens I."/>
            <person name="Voet M."/>
            <person name="Bastiaens I."/>
            <person name="Aert R."/>
            <person name="Defoor E."/>
            <person name="Weitzenegger T."/>
            <person name="Bothe G."/>
            <person name="Ramsperger U."/>
            <person name="Hilbert H."/>
            <person name="Braun M."/>
            <person name="Holzer E."/>
            <person name="Brandt A."/>
            <person name="Peters S."/>
            <person name="van Staveren M."/>
            <person name="Dirkse W."/>
            <person name="Mooijman P."/>
            <person name="Klein Lankhorst R."/>
            <person name="Rose M."/>
            <person name="Hauf J."/>
            <person name="Koetter P."/>
            <person name="Berneiser S."/>
            <person name="Hempel S."/>
            <person name="Feldpausch M."/>
            <person name="Lamberth S."/>
            <person name="Van den Daele H."/>
            <person name="De Keyser A."/>
            <person name="Buysshaert C."/>
            <person name="Gielen J."/>
            <person name="Villarroel R."/>
            <person name="De Clercq R."/>
            <person name="van Montagu M."/>
            <person name="Rogers J."/>
            <person name="Cronin A."/>
            <person name="Quail M.A."/>
            <person name="Bray-Allen S."/>
            <person name="Clark L."/>
            <person name="Doggett J."/>
            <person name="Hall S."/>
            <person name="Kay M."/>
            <person name="Lennard N."/>
            <person name="McLay K."/>
            <person name="Mayes R."/>
            <person name="Pettett A."/>
            <person name="Rajandream M.A."/>
            <person name="Lyne M."/>
            <person name="Benes V."/>
            <person name="Rechmann S."/>
            <person name="Borkova D."/>
            <person name="Bloecker H."/>
            <person name="Scharfe M."/>
            <person name="Grimm M."/>
            <person name="Loehnert T.-H."/>
            <person name="Dose S."/>
            <person name="de Haan M."/>
            <person name="Maarse A.C."/>
            <person name="Schaefer M."/>
            <person name="Mueller-Auer S."/>
            <person name="Gabel C."/>
            <person name="Fuchs M."/>
            <person name="Fartmann B."/>
            <person name="Granderath K."/>
            <person name="Dauner D."/>
            <person name="Herzl A."/>
            <person name="Neumann S."/>
            <person name="Argiriou A."/>
            <person name="Vitale D."/>
            <person name="Liguori R."/>
            <person name="Piravandi E."/>
            <person name="Massenet O."/>
            <person name="Quigley F."/>
            <person name="Clabauld G."/>
            <person name="Muendlein A."/>
            <person name="Felber R."/>
            <person name="Schnabl S."/>
            <person name="Hiller R."/>
            <person name="Schmidt W."/>
            <person name="Lecharny A."/>
            <person name="Aubourg S."/>
            <person name="Chefdor F."/>
            <person name="Cooke R."/>
            <person name="Berger C."/>
            <person name="Monfort A."/>
            <person name="Casacuberta E."/>
            <person name="Gibbons T."/>
            <person name="Weber N."/>
            <person name="Vandenbol M."/>
            <person name="Bargues M."/>
            <person name="Terol J."/>
            <person name="Torres A."/>
            <person name="Perez-Perez A."/>
            <person name="Purnelle B."/>
            <person name="Bent E."/>
            <person name="Johnson S."/>
            <person name="Tacon D."/>
            <person name="Jesse T."/>
            <person name="Heijnen L."/>
            <person name="Schwarz S."/>
            <person name="Scholler P."/>
            <person name="Heber S."/>
            <person name="Francs P."/>
            <person name="Bielke C."/>
            <person name="Frishman D."/>
            <person name="Haase D."/>
            <person name="Lemcke K."/>
            <person name="Mewes H.-W."/>
            <person name="Stocker S."/>
            <person name="Zaccaria P."/>
            <person name="Bevan M."/>
            <person name="Wilson R.K."/>
            <person name="de la Bastide M."/>
            <person name="Habermann K."/>
            <person name="Parnell L."/>
            <person name="Dedhia N."/>
            <person name="Gnoj L."/>
            <person name="Schutz K."/>
            <person name="Huang E."/>
            <person name="Spiegel L."/>
            <person name="Sekhon M."/>
            <person name="Murray J."/>
            <person name="Sheet P."/>
            <person name="Cordes M."/>
            <person name="Abu-Threideh J."/>
            <person name="Stoneking T."/>
            <person name="Kalicki J."/>
            <person name="Graves T."/>
            <person name="Harmon G."/>
            <person name="Edwards J."/>
            <person name="Latreille P."/>
            <person name="Courtney L."/>
            <person name="Cloud J."/>
            <person name="Abbott A."/>
            <person name="Scott K."/>
            <person name="Johnson D."/>
            <person name="Minx P."/>
            <person name="Bentley D."/>
            <person name="Fulton B."/>
            <person name="Miller N."/>
            <person name="Greco T."/>
            <person name="Kemp K."/>
            <person name="Kramer J."/>
            <person name="Fulton L."/>
            <person name="Mardis E."/>
            <person name="Dante M."/>
            <person name="Pepin K."/>
            <person name="Hillier L.W."/>
            <person name="Nelson J."/>
            <person name="Spieth J."/>
            <person name="Ryan E."/>
            <person name="Andrews S."/>
            <person name="Geisel C."/>
            <person name="Layman D."/>
            <person name="Du H."/>
            <person name="Ali J."/>
            <person name="Berghoff A."/>
            <person name="Jones K."/>
            <person name="Drone K."/>
            <person name="Cotton M."/>
            <person name="Joshu C."/>
            <person name="Antonoiu B."/>
            <person name="Zidanic M."/>
            <person name="Strong C."/>
            <person name="Sun H."/>
            <person name="Lamar B."/>
            <person name="Yordan C."/>
            <person name="Ma P."/>
            <person name="Zhong J."/>
            <person name="Preston R."/>
            <person name="Vil D."/>
            <person name="Shekher M."/>
            <person name="Matero A."/>
            <person name="Shah R."/>
            <person name="Swaby I.K."/>
            <person name="O'Shaughnessy A."/>
            <person name="Rodriguez M."/>
            <person name="Hoffman J."/>
            <person name="Till S."/>
            <person name="Granat S."/>
            <person name="Shohdy N."/>
            <person name="Hasegawa A."/>
            <person name="Hameed A."/>
            <person name="Lodhi M."/>
            <person name="Johnson A."/>
            <person name="Chen E."/>
            <person name="Marra M.A."/>
            <person name="Martienssen R."/>
            <person name="McCombie W.R."/>
        </authorList>
    </citation>
    <scope>NUCLEOTIDE SEQUENCE [LARGE SCALE GENOMIC DNA]</scope>
    <source>
        <strain>cv. Columbia</strain>
    </source>
</reference>
<reference key="4">
    <citation type="journal article" date="2017" name="Plant J.">
        <title>Araport11: a complete reannotation of the Arabidopsis thaliana reference genome.</title>
        <authorList>
            <person name="Cheng C.Y."/>
            <person name="Krishnakumar V."/>
            <person name="Chan A.P."/>
            <person name="Thibaud-Nissen F."/>
            <person name="Schobel S."/>
            <person name="Town C.D."/>
        </authorList>
    </citation>
    <scope>GENOME REANNOTATION</scope>
    <source>
        <strain>cv. Columbia</strain>
    </source>
</reference>
<reference key="5">
    <citation type="journal article" date="2002" name="Plant J.">
        <title>Two distinct high-affinity sulfate transporters with different inducibilities mediate uptake of sulfate in Arabidopsis roots.</title>
        <authorList>
            <person name="Yoshimoto N."/>
            <person name="Takahashi H."/>
            <person name="Smith F.W."/>
            <person name="Yamaya T."/>
            <person name="Saito K."/>
        </authorList>
    </citation>
    <scope>FUNCTION</scope>
    <scope>TISSUE SPECIFICITY</scope>
    <scope>INDUCTION</scope>
    <source>
        <strain>cv. Columbia</strain>
    </source>
</reference>
<reference key="6">
    <citation type="journal article" date="2010" name="J. Biol. Chem.">
        <title>Binding of cysteine synthase to the STAS domain of sulfate transporter and its regulatory consequences.</title>
        <authorList>
            <person name="Shibagaki N."/>
            <person name="Grossman A.R."/>
        </authorList>
    </citation>
    <scope>INTERACTION WITH OASA1</scope>
</reference>
<keyword id="KW-0472">Membrane</keyword>
<keyword id="KW-1185">Reference proteome</keyword>
<keyword id="KW-0764">Sulfate transport</keyword>
<keyword id="KW-0769">Symport</keyword>
<keyword id="KW-0812">Transmembrane</keyword>
<keyword id="KW-1133">Transmembrane helix</keyword>
<keyword id="KW-0813">Transport</keyword>
<name>SUT11_ARATH</name>
<dbReference type="EMBL" id="AB018695">
    <property type="protein sequence ID" value="BAA33932.1"/>
    <property type="molecule type" value="mRNA"/>
</dbReference>
<dbReference type="EMBL" id="AC002983">
    <property type="protein sequence ID" value="AAB81876.1"/>
    <property type="molecule type" value="Genomic_DNA"/>
</dbReference>
<dbReference type="EMBL" id="AL161512">
    <property type="protein sequence ID" value="CAB77987.1"/>
    <property type="molecule type" value="Genomic_DNA"/>
</dbReference>
<dbReference type="EMBL" id="CP002687">
    <property type="protein sequence ID" value="AEE82664.1"/>
    <property type="molecule type" value="Genomic_DNA"/>
</dbReference>
<dbReference type="PIR" id="T00946">
    <property type="entry name" value="T00946"/>
</dbReference>
<dbReference type="PIR" id="T51839">
    <property type="entry name" value="T51839"/>
</dbReference>
<dbReference type="RefSeq" id="NP_192602.1">
    <property type="nucleotide sequence ID" value="NM_116931.3"/>
</dbReference>
<dbReference type="SMR" id="Q9SAY1"/>
<dbReference type="FunCoup" id="Q9SAY1">
    <property type="interactions" value="319"/>
</dbReference>
<dbReference type="IntAct" id="Q9SAY1">
    <property type="interactions" value="1"/>
</dbReference>
<dbReference type="STRING" id="3702.Q9SAY1"/>
<dbReference type="TCDB" id="2.A.53.1.7">
    <property type="family name" value="the sulfate permease (sulp) family"/>
</dbReference>
<dbReference type="PaxDb" id="3702-AT4G08620.1"/>
<dbReference type="ProteomicsDB" id="226752"/>
<dbReference type="EnsemblPlants" id="AT4G08620.1">
    <property type="protein sequence ID" value="AT4G08620.1"/>
    <property type="gene ID" value="AT4G08620"/>
</dbReference>
<dbReference type="GeneID" id="826426"/>
<dbReference type="Gramene" id="AT4G08620.1">
    <property type="protein sequence ID" value="AT4G08620.1"/>
    <property type="gene ID" value="AT4G08620"/>
</dbReference>
<dbReference type="KEGG" id="ath:AT4G08620"/>
<dbReference type="Araport" id="AT4G08620"/>
<dbReference type="TAIR" id="AT4G08620">
    <property type="gene designation" value="SULTR1"/>
</dbReference>
<dbReference type="eggNOG" id="KOG0236">
    <property type="taxonomic scope" value="Eukaryota"/>
</dbReference>
<dbReference type="HOGENOM" id="CLU_003182_13_2_1"/>
<dbReference type="InParanoid" id="Q9SAY1"/>
<dbReference type="OMA" id="VMLIEHI"/>
<dbReference type="PhylomeDB" id="Q9SAY1"/>
<dbReference type="PRO" id="PR:Q9SAY1"/>
<dbReference type="Proteomes" id="UP000006548">
    <property type="component" value="Chromosome 4"/>
</dbReference>
<dbReference type="ExpressionAtlas" id="Q9SAY1">
    <property type="expression patterns" value="baseline and differential"/>
</dbReference>
<dbReference type="GO" id="GO:0016020">
    <property type="term" value="C:membrane"/>
    <property type="evidence" value="ECO:0007669"/>
    <property type="project" value="UniProtKB-SubCell"/>
</dbReference>
<dbReference type="GO" id="GO:0008271">
    <property type="term" value="F:secondary active sulfate transmembrane transporter activity"/>
    <property type="evidence" value="ECO:0007669"/>
    <property type="project" value="InterPro"/>
</dbReference>
<dbReference type="GO" id="GO:0015116">
    <property type="term" value="F:sulfate transmembrane transporter activity"/>
    <property type="evidence" value="ECO:0000316"/>
    <property type="project" value="TAIR"/>
</dbReference>
<dbReference type="GO" id="GO:0015293">
    <property type="term" value="F:symporter activity"/>
    <property type="evidence" value="ECO:0007669"/>
    <property type="project" value="UniProtKB-KW"/>
</dbReference>
<dbReference type="GO" id="GO:1902358">
    <property type="term" value="P:sulfate transmembrane transport"/>
    <property type="evidence" value="ECO:0000316"/>
    <property type="project" value="TAIR"/>
</dbReference>
<dbReference type="CDD" id="cd07042">
    <property type="entry name" value="STAS_SulP_like_sulfate_transporter"/>
    <property type="match status" value="1"/>
</dbReference>
<dbReference type="FunFam" id="3.30.750.24:FF:000002">
    <property type="entry name" value="Sulfate transporter 31"/>
    <property type="match status" value="1"/>
</dbReference>
<dbReference type="Gene3D" id="3.30.750.24">
    <property type="entry name" value="STAS domain"/>
    <property type="match status" value="1"/>
</dbReference>
<dbReference type="InterPro" id="IPR018045">
    <property type="entry name" value="S04_transporter_CS"/>
</dbReference>
<dbReference type="InterPro" id="IPR011547">
    <property type="entry name" value="SLC26A/SulP_dom"/>
</dbReference>
<dbReference type="InterPro" id="IPR001902">
    <property type="entry name" value="SLC26A/SulP_fam"/>
</dbReference>
<dbReference type="InterPro" id="IPR002645">
    <property type="entry name" value="STAS_dom"/>
</dbReference>
<dbReference type="InterPro" id="IPR036513">
    <property type="entry name" value="STAS_dom_sf"/>
</dbReference>
<dbReference type="NCBIfam" id="TIGR00815">
    <property type="entry name" value="sulP"/>
    <property type="match status" value="1"/>
</dbReference>
<dbReference type="PANTHER" id="PTHR11814">
    <property type="entry name" value="SULFATE TRANSPORTER"/>
    <property type="match status" value="1"/>
</dbReference>
<dbReference type="Pfam" id="PF01740">
    <property type="entry name" value="STAS"/>
    <property type="match status" value="1"/>
</dbReference>
<dbReference type="Pfam" id="PF00916">
    <property type="entry name" value="Sulfate_transp"/>
    <property type="match status" value="1"/>
</dbReference>
<dbReference type="SUPFAM" id="SSF52091">
    <property type="entry name" value="SpoIIaa-like"/>
    <property type="match status" value="1"/>
</dbReference>
<dbReference type="PROSITE" id="PS01130">
    <property type="entry name" value="SLC26A"/>
    <property type="match status" value="1"/>
</dbReference>
<dbReference type="PROSITE" id="PS50801">
    <property type="entry name" value="STAS"/>
    <property type="match status" value="1"/>
</dbReference>
<proteinExistence type="evidence at protein level"/>
<protein>
    <recommendedName>
        <fullName>Sulfate transporter 1.1</fullName>
    </recommendedName>
    <alternativeName>
        <fullName>AST101</fullName>
    </alternativeName>
    <alternativeName>
        <fullName>High-affinity sulfate transporter 1</fullName>
    </alternativeName>
    <alternativeName>
        <fullName>Hst1At</fullName>
    </alternativeName>
</protein>
<evidence type="ECO:0000255" key="1"/>
<evidence type="ECO:0000255" key="2">
    <source>
        <dbReference type="PROSITE-ProRule" id="PRU00198"/>
    </source>
</evidence>
<evidence type="ECO:0000256" key="3">
    <source>
        <dbReference type="SAM" id="MobiDB-lite"/>
    </source>
</evidence>
<evidence type="ECO:0000269" key="4">
    <source>
    </source>
</evidence>
<evidence type="ECO:0000269" key="5">
    <source>
    </source>
</evidence>
<evidence type="ECO:0000269" key="6">
    <source>
    </source>
</evidence>
<evidence type="ECO:0000269" key="7">
    <source>
    </source>
</evidence>
<evidence type="ECO:0000305" key="8"/>
<gene>
    <name type="primary">SULTR1;1</name>
    <name type="synonym">HST1</name>
    <name type="ordered locus">At4g08620</name>
    <name type="ORF">T3F12.7</name>
</gene>
<sequence length="649" mass="70657">MSGTINPPDGGGSGARNPPVVRQRVLAPPKAGLLKDIKSVVEETFFHDAPLRDFKGQTPAKKALLGIQAVFPIIGWAREYTLRKFRGDLIAGLTIASLCIPQDIGYAKLANVDPKYGLYSSFVPPLIYAGMGSSRDIAIGPVAVVSLLVGTLCQAVIDPKKNPEDYLRLVFTATFFAGIFQAGLGFLRLGFLIDFLSHAAVVGFMGGAAITIALQQLKGFLGIKTFTKKTDIVSVMHSVFKNAEHGWNWQTIVIGASFLTFLLVTKFIGKRNRKLFWVPAIAPLISVIISTFFVFIFRADKQGVQIVKHIDQGINPISVHKIFFSGKYFTEGIRIGGIAGMVALTEAVAIARTFAAMKDYQIDGNKEMIALGTMNVVGSMTSCYIATGSFSRSAVNFMAGVETAVSNIVMAIVVALTLEFITPLFKYTPNAILAAIIISAVLGLIDIDAAILIWRIDKLDFLACMGAFLGVIFISVEIGLLIAVVISFAKILLQVTRPRTTVLGKLPNSNVYRNTLQYPDAAQIPGILIIRVDSAIYFSNSNYVRERASRWVREEQENAKEYGMPAIRFVIIEMSPVTDIDTSGIHSIEELLKSLEKQEIQLILANPGPVVIEKLYASKFVEEIGEKNIFLTVGDAVAVCSTEVAEQQT</sequence>
<accession>Q9SAY1</accession>
<accession>O22277</accession>
<organism>
    <name type="scientific">Arabidopsis thaliana</name>
    <name type="common">Mouse-ear cress</name>
    <dbReference type="NCBI Taxonomy" id="3702"/>
    <lineage>
        <taxon>Eukaryota</taxon>
        <taxon>Viridiplantae</taxon>
        <taxon>Streptophyta</taxon>
        <taxon>Embryophyta</taxon>
        <taxon>Tracheophyta</taxon>
        <taxon>Spermatophyta</taxon>
        <taxon>Magnoliopsida</taxon>
        <taxon>eudicotyledons</taxon>
        <taxon>Gunneridae</taxon>
        <taxon>Pentapetalae</taxon>
        <taxon>rosids</taxon>
        <taxon>malvids</taxon>
        <taxon>Brassicales</taxon>
        <taxon>Brassicaceae</taxon>
        <taxon>Camelineae</taxon>
        <taxon>Arabidopsis</taxon>
    </lineage>
</organism>